<keyword id="KW-0325">Glycoprotein</keyword>
<keyword id="KW-0646">Protease inhibitor</keyword>
<keyword id="KW-1185">Reference proteome</keyword>
<keyword id="KW-0964">Secreted</keyword>
<keyword id="KW-0722">Serine protease inhibitor</keyword>
<keyword id="KW-0732">Signal</keyword>
<protein>
    <recommendedName>
        <fullName>Serpin A12</fullName>
    </recommendedName>
    <alternativeName>
        <fullName>Visceral adipose tissue-derived serine protease inhibitor</fullName>
        <shortName>Vaspin</shortName>
    </alternativeName>
    <alternativeName>
        <fullName>Visceral adipose-specific serpin</fullName>
    </alternativeName>
</protein>
<comment type="function">
    <text evidence="1 5">Adipokine that modulates insulin action by specifically inhibiting its target protease KLK7 in white adipose tissues.</text>
</comment>
<comment type="activity regulation">
    <text evidence="3">Inhibition of KLK7 is enhanced by heparin.</text>
</comment>
<comment type="subunit">
    <text evidence="3">Forms a stable complex with KLK7.</text>
</comment>
<comment type="subcellular location">
    <subcellularLocation>
        <location evidence="2">Secreted</location>
    </subcellularLocation>
</comment>
<comment type="tissue specificity">
    <text evidence="5">Expressed in visceral adipose tissues.</text>
</comment>
<comment type="developmental stage">
    <text evidence="5">Barely detectable in at 6 weeks and is highly expressed in adipocytes of visceral white adipose tissues at 30 weeks.</text>
</comment>
<comment type="domain">
    <text evidence="3">The reactive center loop (RCL) extends out from the body of the protein and directs binding to the target protease. The protease cleaves the serpin at the reactive site within the RCL, establishing a covalent linkage between the carboxyl group of the serpin reactive site and the serine hydroxyl of the protease. The resulting inactive serpin-protease complex is highly stable.</text>
</comment>
<comment type="PTM">
    <text evidence="3">Glycosylation slightly decreases affinity for heparin, but otherwise has no significant effect on KLK7 inhibitory activity or thermal stability of the protein.</text>
</comment>
<comment type="similarity">
    <text evidence="6">Belongs to the serpin family.</text>
</comment>
<sequence>MNLVLGLGLFLAGLLTVKGLLQDRDAPDTYESPVRVQEWRGKKDARELTRHNMEFGFKLLQRLASNSRQGNIFLSPLSISTAFSMLSLGAQNSTLEEIREGFNFKEMSDRDMHMGFHYLLQKLNRETQDVKMSIGNALFMDQRLRPQQRFLKLAKNLYDADMILTNFQDLENTQKNINKYISRKTHNRIENMVKNIDPGTVMLLTNYIYFQGRWQYEFDPKQTKEEDFFIEEGKTVKVPMMFQRGMYDMAYDSQLSCTILEMPYRGNITATFVLPDSGKLRLLEQGLQADIFAKWKSLLSKRVVDVWVPRLHISATYNMKKVLSRLGISKIFEEHGDLTRISSHRSLKVGEAVHKAELRMNEKGTEGAAGSGAQTLPMETPRRMKLNAPFLMMIYENLMPSMIFLARIYNP</sequence>
<name>SPA12_RAT</name>
<evidence type="ECO:0000250" key="1"/>
<evidence type="ECO:0000250" key="2">
    <source>
        <dbReference type="UniProtKB" id="Q7TMF5"/>
    </source>
</evidence>
<evidence type="ECO:0000250" key="3">
    <source>
        <dbReference type="UniProtKB" id="Q8IW75"/>
    </source>
</evidence>
<evidence type="ECO:0000255" key="4"/>
<evidence type="ECO:0000269" key="5">
    <source>
    </source>
</evidence>
<evidence type="ECO:0000305" key="6"/>
<gene>
    <name type="primary">Serpina12</name>
</gene>
<reference key="1">
    <citation type="journal article" date="2005" name="Proc. Natl. Acad. Sci. U.S.A.">
        <title>Visceral adipose tissue-derived serine protease inhibitor: a unique insulin-sensitizing adipocytokine in obesity.</title>
        <authorList>
            <person name="Hida K."/>
            <person name="Wada J."/>
            <person name="Eguchi J."/>
            <person name="Zhang H."/>
            <person name="Baba M."/>
            <person name="Seida A."/>
            <person name="Hashimoto I."/>
            <person name="Okada T."/>
            <person name="Yasuhara A."/>
            <person name="Nakatsuka A."/>
            <person name="Shikata K."/>
            <person name="Hourai S."/>
            <person name="Futami J."/>
            <person name="Watanabe E."/>
            <person name="Matsuki Y."/>
            <person name="Hiramatsu R."/>
            <person name="Akagi S."/>
            <person name="Makino H."/>
            <person name="Kanwar Y.S."/>
        </authorList>
    </citation>
    <scope>NUCLEOTIDE SEQUENCE [MRNA]</scope>
    <scope>FUNCTION</scope>
    <scope>TISSUE SPECIFICITY</scope>
    <scope>DEVELOPMENTAL STAGE</scope>
    <source>
        <strain>OLETF</strain>
        <tissue>Adipose tissue</tissue>
    </source>
</reference>
<feature type="signal peptide" evidence="1">
    <location>
        <begin position="1"/>
        <end position="20"/>
    </location>
</feature>
<feature type="chain" id="PRO_0000041978" description="Serpin A12">
    <location>
        <begin position="21"/>
        <end position="411"/>
    </location>
</feature>
<feature type="region of interest" description="Reactive center loop" evidence="3">
    <location>
        <begin position="364"/>
        <end position="382"/>
    </location>
</feature>
<feature type="site" description="Cleavage" evidence="3">
    <location>
        <begin position="378"/>
        <end position="379"/>
    </location>
</feature>
<feature type="glycosylation site" description="N-linked (GlcNAc...) asparagine" evidence="4">
    <location>
        <position position="92"/>
    </location>
</feature>
<feature type="glycosylation site" description="N-linked (GlcNAc...) asparagine" evidence="4">
    <location>
        <position position="267"/>
    </location>
</feature>
<organism>
    <name type="scientific">Rattus norvegicus</name>
    <name type="common">Rat</name>
    <dbReference type="NCBI Taxonomy" id="10116"/>
    <lineage>
        <taxon>Eukaryota</taxon>
        <taxon>Metazoa</taxon>
        <taxon>Chordata</taxon>
        <taxon>Craniata</taxon>
        <taxon>Vertebrata</taxon>
        <taxon>Euteleostomi</taxon>
        <taxon>Mammalia</taxon>
        <taxon>Eutheria</taxon>
        <taxon>Euarchontoglires</taxon>
        <taxon>Glires</taxon>
        <taxon>Rodentia</taxon>
        <taxon>Myomorpha</taxon>
        <taxon>Muroidea</taxon>
        <taxon>Muridae</taxon>
        <taxon>Murinae</taxon>
        <taxon>Rattus</taxon>
    </lineage>
</organism>
<accession>Q8R4Z1</accession>
<dbReference type="EMBL" id="AF245398">
    <property type="protein sequence ID" value="AAL99574.1"/>
    <property type="molecule type" value="mRNA"/>
</dbReference>
<dbReference type="SMR" id="Q8R4Z1"/>
<dbReference type="FunCoup" id="Q8R4Z1">
    <property type="interactions" value="68"/>
</dbReference>
<dbReference type="STRING" id="10116.ENSRNOP00000012960"/>
<dbReference type="MEROPS" id="I04.091"/>
<dbReference type="GlyCosmos" id="Q8R4Z1">
    <property type="glycosylation" value="2 sites, No reported glycans"/>
</dbReference>
<dbReference type="GlyGen" id="Q8R4Z1">
    <property type="glycosylation" value="2 sites"/>
</dbReference>
<dbReference type="iPTMnet" id="Q8R4Z1"/>
<dbReference type="PhosphoSitePlus" id="Q8R4Z1"/>
<dbReference type="PaxDb" id="10116-ENSRNOP00000012960"/>
<dbReference type="UCSC" id="RGD:708485">
    <property type="organism name" value="rat"/>
</dbReference>
<dbReference type="AGR" id="RGD:708485"/>
<dbReference type="RGD" id="708485">
    <property type="gene designation" value="Serpina12"/>
</dbReference>
<dbReference type="eggNOG" id="KOG2392">
    <property type="taxonomic scope" value="Eukaryota"/>
</dbReference>
<dbReference type="InParanoid" id="Q8R4Z1"/>
<dbReference type="PhylomeDB" id="Q8R4Z1"/>
<dbReference type="PRO" id="PR:Q8R4Z1"/>
<dbReference type="Proteomes" id="UP000002494">
    <property type="component" value="Unplaced"/>
</dbReference>
<dbReference type="GO" id="GO:0005615">
    <property type="term" value="C:extracellular space"/>
    <property type="evidence" value="ECO:0000266"/>
    <property type="project" value="RGD"/>
</dbReference>
<dbReference type="GO" id="GO:0005886">
    <property type="term" value="C:plasma membrane"/>
    <property type="evidence" value="ECO:0000266"/>
    <property type="project" value="RGD"/>
</dbReference>
<dbReference type="GO" id="GO:0140678">
    <property type="term" value="F:molecular function inhibitor activity"/>
    <property type="evidence" value="ECO:0000266"/>
    <property type="project" value="RGD"/>
</dbReference>
<dbReference type="GO" id="GO:0004867">
    <property type="term" value="F:serine-type endopeptidase inhibitor activity"/>
    <property type="evidence" value="ECO:0000318"/>
    <property type="project" value="GO_Central"/>
</dbReference>
<dbReference type="GO" id="GO:0006094">
    <property type="term" value="P:gluconeogenesis"/>
    <property type="evidence" value="ECO:0000266"/>
    <property type="project" value="RGD"/>
</dbReference>
<dbReference type="GO" id="GO:0006006">
    <property type="term" value="P:glucose metabolic process"/>
    <property type="evidence" value="ECO:0000270"/>
    <property type="project" value="RGD"/>
</dbReference>
<dbReference type="GO" id="GO:0008610">
    <property type="term" value="P:lipid biosynthetic process"/>
    <property type="evidence" value="ECO:0000266"/>
    <property type="project" value="RGD"/>
</dbReference>
<dbReference type="GO" id="GO:0045721">
    <property type="term" value="P:negative regulation of gluconeogenesis"/>
    <property type="evidence" value="ECO:0000266"/>
    <property type="project" value="RGD"/>
</dbReference>
<dbReference type="GO" id="GO:0051055">
    <property type="term" value="P:negative regulation of lipid biosynthetic process"/>
    <property type="evidence" value="ECO:0000266"/>
    <property type="project" value="RGD"/>
</dbReference>
<dbReference type="GO" id="GO:0043491">
    <property type="term" value="P:phosphatidylinositol 3-kinase/protein kinase B signal transduction"/>
    <property type="evidence" value="ECO:0000266"/>
    <property type="project" value="RGD"/>
</dbReference>
<dbReference type="GO" id="GO:0046628">
    <property type="term" value="P:positive regulation of insulin receptor signaling pathway"/>
    <property type="evidence" value="ECO:0000266"/>
    <property type="project" value="RGD"/>
</dbReference>
<dbReference type="GO" id="GO:0051897">
    <property type="term" value="P:positive regulation of phosphatidylinositol 3-kinase/protein kinase B signal transduction"/>
    <property type="evidence" value="ECO:0000266"/>
    <property type="project" value="RGD"/>
</dbReference>
<dbReference type="GO" id="GO:0090181">
    <property type="term" value="P:regulation of cholesterol metabolic process"/>
    <property type="evidence" value="ECO:0000266"/>
    <property type="project" value="RGD"/>
</dbReference>
<dbReference type="GO" id="GO:0090207">
    <property type="term" value="P:regulation of triglyceride metabolic process"/>
    <property type="evidence" value="ECO:0000266"/>
    <property type="project" value="RGD"/>
</dbReference>
<dbReference type="CDD" id="cd19558">
    <property type="entry name" value="serpinA12_vaspin"/>
    <property type="match status" value="1"/>
</dbReference>
<dbReference type="FunFam" id="3.30.497.10:FF:000001">
    <property type="entry name" value="Serine protease inhibitor"/>
    <property type="match status" value="1"/>
</dbReference>
<dbReference type="FunFam" id="2.30.39.10:FF:000002">
    <property type="entry name" value="Serpin family D member 1"/>
    <property type="match status" value="1"/>
</dbReference>
<dbReference type="Gene3D" id="2.30.39.10">
    <property type="entry name" value="Alpha-1-antitrypsin, domain 1"/>
    <property type="match status" value="1"/>
</dbReference>
<dbReference type="Gene3D" id="3.30.497.10">
    <property type="entry name" value="Antithrombin, subunit I, domain 2"/>
    <property type="match status" value="1"/>
</dbReference>
<dbReference type="InterPro" id="IPR023796">
    <property type="entry name" value="Serpin_dom"/>
</dbReference>
<dbReference type="InterPro" id="IPR000215">
    <property type="entry name" value="Serpin_fam"/>
</dbReference>
<dbReference type="InterPro" id="IPR036186">
    <property type="entry name" value="Serpin_sf"/>
</dbReference>
<dbReference type="InterPro" id="IPR042178">
    <property type="entry name" value="Serpin_sf_1"/>
</dbReference>
<dbReference type="InterPro" id="IPR042185">
    <property type="entry name" value="Serpin_sf_2"/>
</dbReference>
<dbReference type="PANTHER" id="PTHR11461">
    <property type="entry name" value="SERINE PROTEASE INHIBITOR, SERPIN"/>
    <property type="match status" value="1"/>
</dbReference>
<dbReference type="PANTHER" id="PTHR11461:SF157">
    <property type="entry name" value="SERPIN A12"/>
    <property type="match status" value="1"/>
</dbReference>
<dbReference type="Pfam" id="PF00079">
    <property type="entry name" value="Serpin"/>
    <property type="match status" value="1"/>
</dbReference>
<dbReference type="PRINTS" id="PR00780">
    <property type="entry name" value="LEUSERPINII"/>
</dbReference>
<dbReference type="SMART" id="SM00093">
    <property type="entry name" value="SERPIN"/>
    <property type="match status" value="1"/>
</dbReference>
<dbReference type="SUPFAM" id="SSF56574">
    <property type="entry name" value="Serpins"/>
    <property type="match status" value="1"/>
</dbReference>
<proteinExistence type="evidence at transcript level"/>